<gene>
    <name type="primary">TPMT</name>
</gene>
<sequence length="245" mass="28335">MGDSRALLDSEEYPNTEAQKDRVLTLEEWQEKWVNHKTGFHQEQGHQLLKKYLDTFLKGEKALRVFFPLCGKAVEMKWFADRGHSVVGVEISELGIRDFFTEQNLSYSEEPIMEIPGAKIFKSSSGNISLYCCNLFDLPRANIGKFDRIWDRGALVAVNPSDRKRYSDVMLSLTRPGFRYLLSVFSYDPTKHAGPPFYVTDGEVKKLFGSVCNIQCLEKVDVFEERHKSWGIDQIIERLYLFTEK</sequence>
<dbReference type="EC" id="2.1.1.67"/>
<dbReference type="EMBL" id="BC118238">
    <property type="protein sequence ID" value="AAI18239.1"/>
    <property type="molecule type" value="mRNA"/>
</dbReference>
<dbReference type="RefSeq" id="NP_001068999.1">
    <property type="nucleotide sequence ID" value="NM_001075531.1"/>
</dbReference>
<dbReference type="RefSeq" id="XP_005223808.1">
    <property type="nucleotide sequence ID" value="XM_005223751.4"/>
</dbReference>
<dbReference type="RefSeq" id="XP_005223809.1">
    <property type="nucleotide sequence ID" value="XM_005223752.5"/>
</dbReference>
<dbReference type="RefSeq" id="XP_005223811.1">
    <property type="nucleotide sequence ID" value="XM_005223754.5"/>
</dbReference>
<dbReference type="RefSeq" id="XP_024839298.1">
    <property type="nucleotide sequence ID" value="XM_024983530.2"/>
</dbReference>
<dbReference type="RefSeq" id="XP_024839299.1">
    <property type="nucleotide sequence ID" value="XM_024983531.2"/>
</dbReference>
<dbReference type="SMR" id="Q17QQ2"/>
<dbReference type="FunCoup" id="Q17QQ2">
    <property type="interactions" value="285"/>
</dbReference>
<dbReference type="STRING" id="9913.ENSBTAP00000025698"/>
<dbReference type="PaxDb" id="9913-ENSBTAP00000025698"/>
<dbReference type="PeptideAtlas" id="Q17QQ2"/>
<dbReference type="Ensembl" id="ENSBTAT00000025698.4">
    <property type="protein sequence ID" value="ENSBTAP00000025698.2"/>
    <property type="gene ID" value="ENSBTAG00000019300.5"/>
</dbReference>
<dbReference type="GeneID" id="511644"/>
<dbReference type="KEGG" id="bta:511644"/>
<dbReference type="CTD" id="7172"/>
<dbReference type="VEuPathDB" id="HostDB:ENSBTAG00000019300"/>
<dbReference type="VGNC" id="VGNC:36255">
    <property type="gene designation" value="TPMT"/>
</dbReference>
<dbReference type="eggNOG" id="ENOG502QSF5">
    <property type="taxonomic scope" value="Eukaryota"/>
</dbReference>
<dbReference type="GeneTree" id="ENSGT00390000016823"/>
<dbReference type="HOGENOM" id="CLU_085515_2_0_1"/>
<dbReference type="InParanoid" id="Q17QQ2"/>
<dbReference type="OMA" id="EKWVNRN"/>
<dbReference type="OrthoDB" id="276151at2759"/>
<dbReference type="TreeFam" id="TF328951"/>
<dbReference type="Reactome" id="R-BTA-156581">
    <property type="pathway name" value="Methylation"/>
</dbReference>
<dbReference type="Reactome" id="R-BTA-9748787">
    <property type="pathway name" value="Azathioprine ADME"/>
</dbReference>
<dbReference type="Proteomes" id="UP000009136">
    <property type="component" value="Chromosome 23"/>
</dbReference>
<dbReference type="Bgee" id="ENSBTAG00000019300">
    <property type="expression patterns" value="Expressed in ruminant reticulum and 105 other cell types or tissues"/>
</dbReference>
<dbReference type="GO" id="GO:0005737">
    <property type="term" value="C:cytoplasm"/>
    <property type="evidence" value="ECO:0007669"/>
    <property type="project" value="UniProtKB-SubCell"/>
</dbReference>
<dbReference type="GO" id="GO:1904047">
    <property type="term" value="F:S-adenosyl-L-methionine binding"/>
    <property type="evidence" value="ECO:0007669"/>
    <property type="project" value="Ensembl"/>
</dbReference>
<dbReference type="GO" id="GO:0008119">
    <property type="term" value="F:thiopurine S-methyltransferase activity"/>
    <property type="evidence" value="ECO:0000318"/>
    <property type="project" value="GO_Central"/>
</dbReference>
<dbReference type="GO" id="GO:0032259">
    <property type="term" value="P:methylation"/>
    <property type="evidence" value="ECO:0007669"/>
    <property type="project" value="UniProtKB-KW"/>
</dbReference>
<dbReference type="GO" id="GO:0006805">
    <property type="term" value="P:xenobiotic metabolic process"/>
    <property type="evidence" value="ECO:0007669"/>
    <property type="project" value="Ensembl"/>
</dbReference>
<dbReference type="FunFam" id="3.40.50.150:FF:000101">
    <property type="entry name" value="Thiopurine S-methyltransferase"/>
    <property type="match status" value="1"/>
</dbReference>
<dbReference type="Gene3D" id="3.40.50.150">
    <property type="entry name" value="Vaccinia Virus protein VP39"/>
    <property type="match status" value="1"/>
</dbReference>
<dbReference type="HAMAP" id="MF_00812">
    <property type="entry name" value="Thiopur_methtran"/>
    <property type="match status" value="1"/>
</dbReference>
<dbReference type="InterPro" id="IPR029063">
    <property type="entry name" value="SAM-dependent_MTases_sf"/>
</dbReference>
<dbReference type="InterPro" id="IPR025835">
    <property type="entry name" value="Thiopurine_S-MeTrfase"/>
</dbReference>
<dbReference type="InterPro" id="IPR008854">
    <property type="entry name" value="TPMT"/>
</dbReference>
<dbReference type="PANTHER" id="PTHR10259">
    <property type="entry name" value="THIOPURINE S-METHYLTRANSFERASE"/>
    <property type="match status" value="1"/>
</dbReference>
<dbReference type="PANTHER" id="PTHR10259:SF11">
    <property type="entry name" value="THIOPURINE S-METHYLTRANSFERASE"/>
    <property type="match status" value="1"/>
</dbReference>
<dbReference type="Pfam" id="PF05724">
    <property type="entry name" value="TPMT"/>
    <property type="match status" value="1"/>
</dbReference>
<dbReference type="PIRSF" id="PIRSF023956">
    <property type="entry name" value="Thiopurine_S-methyltransferase"/>
    <property type="match status" value="1"/>
</dbReference>
<dbReference type="SUPFAM" id="SSF53335">
    <property type="entry name" value="S-adenosyl-L-methionine-dependent methyltransferases"/>
    <property type="match status" value="1"/>
</dbReference>
<dbReference type="PROSITE" id="PS51585">
    <property type="entry name" value="SAM_MT_TPMT"/>
    <property type="match status" value="1"/>
</dbReference>
<protein>
    <recommendedName>
        <fullName>Thiopurine S-methyltransferase</fullName>
        <ecNumber>2.1.1.67</ecNumber>
    </recommendedName>
    <alternativeName>
        <fullName>Thiopurine methyltransferase</fullName>
    </alternativeName>
</protein>
<keyword id="KW-0007">Acetylation</keyword>
<keyword id="KW-0963">Cytoplasm</keyword>
<keyword id="KW-0489">Methyltransferase</keyword>
<keyword id="KW-1185">Reference proteome</keyword>
<keyword id="KW-0949">S-adenosyl-L-methionine</keyword>
<keyword id="KW-0808">Transferase</keyword>
<organism>
    <name type="scientific">Bos taurus</name>
    <name type="common">Bovine</name>
    <dbReference type="NCBI Taxonomy" id="9913"/>
    <lineage>
        <taxon>Eukaryota</taxon>
        <taxon>Metazoa</taxon>
        <taxon>Chordata</taxon>
        <taxon>Craniata</taxon>
        <taxon>Vertebrata</taxon>
        <taxon>Euteleostomi</taxon>
        <taxon>Mammalia</taxon>
        <taxon>Eutheria</taxon>
        <taxon>Laurasiatheria</taxon>
        <taxon>Artiodactyla</taxon>
        <taxon>Ruminantia</taxon>
        <taxon>Pecora</taxon>
        <taxon>Bovidae</taxon>
        <taxon>Bovinae</taxon>
        <taxon>Bos</taxon>
    </lineage>
</organism>
<feature type="chain" id="PRO_0000278660" description="Thiopurine S-methyltransferase">
    <location>
        <begin position="1"/>
        <end position="245"/>
    </location>
</feature>
<feature type="binding site" evidence="1">
    <location>
        <begin position="29"/>
        <end position="40"/>
    </location>
    <ligand>
        <name>S-adenosyl-L-methionine</name>
        <dbReference type="ChEBI" id="CHEBI:59789"/>
    </ligand>
</feature>
<feature type="binding site" evidence="1">
    <location>
        <position position="40"/>
    </location>
    <ligand>
        <name>substrate</name>
    </ligand>
</feature>
<feature type="binding site" evidence="1">
    <location>
        <position position="69"/>
    </location>
    <ligand>
        <name>S-adenosyl-L-methionine</name>
        <dbReference type="ChEBI" id="CHEBI:59789"/>
    </ligand>
</feature>
<feature type="binding site" evidence="1">
    <location>
        <position position="90"/>
    </location>
    <ligand>
        <name>S-adenosyl-L-methionine</name>
        <dbReference type="ChEBI" id="CHEBI:59789"/>
    </ligand>
</feature>
<feature type="binding site" evidence="1">
    <location>
        <position position="152"/>
    </location>
    <ligand>
        <name>S-adenosyl-L-methionine</name>
        <dbReference type="ChEBI" id="CHEBI:59789"/>
    </ligand>
</feature>
<feature type="modified residue" description="N6-acetyllysine" evidence="2">
    <location>
        <position position="58"/>
    </location>
</feature>
<name>TPMT_BOVIN</name>
<evidence type="ECO:0000250" key="1"/>
<evidence type="ECO:0000250" key="2">
    <source>
        <dbReference type="UniProtKB" id="P51580"/>
    </source>
</evidence>
<evidence type="ECO:0000305" key="3"/>
<accession>Q17QQ2</accession>
<reference key="1">
    <citation type="submission" date="2006-06" db="EMBL/GenBank/DDBJ databases">
        <authorList>
            <consortium name="NIH - Mammalian Gene Collection (MGC) project"/>
        </authorList>
    </citation>
    <scope>NUCLEOTIDE SEQUENCE [LARGE SCALE MRNA]</scope>
    <source>
        <strain>Hereford</strain>
        <tissue>Basal ganglia</tissue>
    </source>
</reference>
<comment type="catalytic activity">
    <reaction evidence="2">
        <text>S-adenosyl-L-methionine + a thiopurine = S-adenosyl-L-homocysteine + a thiopurine S-methylether.</text>
        <dbReference type="EC" id="2.1.1.67"/>
    </reaction>
</comment>
<comment type="subunit">
    <text evidence="2">Monomer.</text>
</comment>
<comment type="subcellular location">
    <subcellularLocation>
        <location evidence="1">Cytoplasm</location>
    </subcellularLocation>
</comment>
<comment type="similarity">
    <text evidence="3">Belongs to the class I-like SAM-binding methyltransferase superfamily. TPMT family.</text>
</comment>
<proteinExistence type="evidence at transcript level"/>